<accession>Q54GT3</accession>
<gene>
    <name type="ORF">DDB_G0289981</name>
</gene>
<protein>
    <recommendedName>
        <fullName>Putative uncharacterized protein DDB_G0289981</fullName>
    </recommendedName>
</protein>
<sequence length="72" mass="8497">MSFFKLYEIKKKYVNNNYNNNNNNNNNNNNNNNNNNNNNNNNNNININNNNNNNNNNNNNNNNIEIIILLLL</sequence>
<name>Y9505_DICDI</name>
<evidence type="ECO:0000256" key="1">
    <source>
        <dbReference type="SAM" id="MobiDB-lite"/>
    </source>
</evidence>
<organism>
    <name type="scientific">Dictyostelium discoideum</name>
    <name type="common">Social amoeba</name>
    <dbReference type="NCBI Taxonomy" id="44689"/>
    <lineage>
        <taxon>Eukaryota</taxon>
        <taxon>Amoebozoa</taxon>
        <taxon>Evosea</taxon>
        <taxon>Eumycetozoa</taxon>
        <taxon>Dictyostelia</taxon>
        <taxon>Dictyosteliales</taxon>
        <taxon>Dictyosteliaceae</taxon>
        <taxon>Dictyostelium</taxon>
    </lineage>
</organism>
<proteinExistence type="predicted"/>
<reference key="1">
    <citation type="journal article" date="2005" name="Nature">
        <title>The genome of the social amoeba Dictyostelium discoideum.</title>
        <authorList>
            <person name="Eichinger L."/>
            <person name="Pachebat J.A."/>
            <person name="Gloeckner G."/>
            <person name="Rajandream M.A."/>
            <person name="Sucgang R."/>
            <person name="Berriman M."/>
            <person name="Song J."/>
            <person name="Olsen R."/>
            <person name="Szafranski K."/>
            <person name="Xu Q."/>
            <person name="Tunggal B."/>
            <person name="Kummerfeld S."/>
            <person name="Madera M."/>
            <person name="Konfortov B.A."/>
            <person name="Rivero F."/>
            <person name="Bankier A.T."/>
            <person name="Lehmann R."/>
            <person name="Hamlin N."/>
            <person name="Davies R."/>
            <person name="Gaudet P."/>
            <person name="Fey P."/>
            <person name="Pilcher K."/>
            <person name="Chen G."/>
            <person name="Saunders D."/>
            <person name="Sodergren E.J."/>
            <person name="Davis P."/>
            <person name="Kerhornou A."/>
            <person name="Nie X."/>
            <person name="Hall N."/>
            <person name="Anjard C."/>
            <person name="Hemphill L."/>
            <person name="Bason N."/>
            <person name="Farbrother P."/>
            <person name="Desany B."/>
            <person name="Just E."/>
            <person name="Morio T."/>
            <person name="Rost R."/>
            <person name="Churcher C.M."/>
            <person name="Cooper J."/>
            <person name="Haydock S."/>
            <person name="van Driessche N."/>
            <person name="Cronin A."/>
            <person name="Goodhead I."/>
            <person name="Muzny D.M."/>
            <person name="Mourier T."/>
            <person name="Pain A."/>
            <person name="Lu M."/>
            <person name="Harper D."/>
            <person name="Lindsay R."/>
            <person name="Hauser H."/>
            <person name="James K.D."/>
            <person name="Quiles M."/>
            <person name="Madan Babu M."/>
            <person name="Saito T."/>
            <person name="Buchrieser C."/>
            <person name="Wardroper A."/>
            <person name="Felder M."/>
            <person name="Thangavelu M."/>
            <person name="Johnson D."/>
            <person name="Knights A."/>
            <person name="Loulseged H."/>
            <person name="Mungall K.L."/>
            <person name="Oliver K."/>
            <person name="Price C."/>
            <person name="Quail M.A."/>
            <person name="Urushihara H."/>
            <person name="Hernandez J."/>
            <person name="Rabbinowitsch E."/>
            <person name="Steffen D."/>
            <person name="Sanders M."/>
            <person name="Ma J."/>
            <person name="Kohara Y."/>
            <person name="Sharp S."/>
            <person name="Simmonds M.N."/>
            <person name="Spiegler S."/>
            <person name="Tivey A."/>
            <person name="Sugano S."/>
            <person name="White B."/>
            <person name="Walker D."/>
            <person name="Woodward J.R."/>
            <person name="Winckler T."/>
            <person name="Tanaka Y."/>
            <person name="Shaulsky G."/>
            <person name="Schleicher M."/>
            <person name="Weinstock G.M."/>
            <person name="Rosenthal A."/>
            <person name="Cox E.C."/>
            <person name="Chisholm R.L."/>
            <person name="Gibbs R.A."/>
            <person name="Loomis W.F."/>
            <person name="Platzer M."/>
            <person name="Kay R.R."/>
            <person name="Williams J.G."/>
            <person name="Dear P.H."/>
            <person name="Noegel A.A."/>
            <person name="Barrell B.G."/>
            <person name="Kuspa A."/>
        </authorList>
    </citation>
    <scope>NUCLEOTIDE SEQUENCE [LARGE SCALE GENOMIC DNA]</scope>
    <source>
        <strain>AX4</strain>
    </source>
</reference>
<dbReference type="EMBL" id="AAFI02000149">
    <property type="protein sequence ID" value="EAL62503.1"/>
    <property type="molecule type" value="Genomic_DNA"/>
</dbReference>
<dbReference type="RefSeq" id="XP_635986.1">
    <property type="nucleotide sequence ID" value="XM_630894.1"/>
</dbReference>
<dbReference type="PaxDb" id="44689-DDB0219505"/>
<dbReference type="EnsemblProtists" id="EAL62503">
    <property type="protein sequence ID" value="EAL62503"/>
    <property type="gene ID" value="DDB_G0289981"/>
</dbReference>
<dbReference type="GeneID" id="8627401"/>
<dbReference type="KEGG" id="ddi:DDB_G0289981"/>
<dbReference type="HOGENOM" id="CLU_158859_0_0_1"/>
<dbReference type="InParanoid" id="Q54GT3"/>
<dbReference type="PRO" id="PR:Q54GT3"/>
<dbReference type="Proteomes" id="UP000002195">
    <property type="component" value="Chromosome 5"/>
</dbReference>
<keyword id="KW-1185">Reference proteome</keyword>
<feature type="chain" id="PRO_0000346935" description="Putative uncharacterized protein DDB_G0289981">
    <location>
        <begin position="1"/>
        <end position="72"/>
    </location>
</feature>
<feature type="region of interest" description="Disordered" evidence="1">
    <location>
        <begin position="15"/>
        <end position="62"/>
    </location>
</feature>